<protein>
    <recommendedName>
        <fullName evidence="1">Exodeoxyribonuclease 7 small subunit</fullName>
        <ecNumber evidence="1">3.1.11.6</ecNumber>
    </recommendedName>
    <alternativeName>
        <fullName evidence="1">Exodeoxyribonuclease VII small subunit</fullName>
        <shortName evidence="1">Exonuclease VII small subunit</shortName>
    </alternativeName>
</protein>
<sequence length="86" mass="9474">MAKKSPENASPVAQFEQSLESLEQLVEQMETGELSLEASLSAYERGVGLYRQCQQALEQAELRVRLLSDPAQPEASEPFDPPSHDG</sequence>
<organism>
    <name type="scientific">Stenotrophomonas maltophilia (strain K279a)</name>
    <dbReference type="NCBI Taxonomy" id="522373"/>
    <lineage>
        <taxon>Bacteria</taxon>
        <taxon>Pseudomonadati</taxon>
        <taxon>Pseudomonadota</taxon>
        <taxon>Gammaproteobacteria</taxon>
        <taxon>Lysobacterales</taxon>
        <taxon>Lysobacteraceae</taxon>
        <taxon>Stenotrophomonas</taxon>
        <taxon>Stenotrophomonas maltophilia group</taxon>
    </lineage>
</organism>
<proteinExistence type="inferred from homology"/>
<comment type="function">
    <text evidence="1">Bidirectionally degrades single-stranded DNA into large acid-insoluble oligonucleotides, which are then degraded further into small acid-soluble oligonucleotides.</text>
</comment>
<comment type="catalytic activity">
    <reaction evidence="1">
        <text>Exonucleolytic cleavage in either 5'- to 3'- or 3'- to 5'-direction to yield nucleoside 5'-phosphates.</text>
        <dbReference type="EC" id="3.1.11.6"/>
    </reaction>
</comment>
<comment type="subunit">
    <text evidence="1">Heterooligomer composed of large and small subunits.</text>
</comment>
<comment type="subcellular location">
    <subcellularLocation>
        <location evidence="1">Cytoplasm</location>
    </subcellularLocation>
</comment>
<comment type="similarity">
    <text evidence="1">Belongs to the XseB family.</text>
</comment>
<name>EX7S_STRMK</name>
<reference key="1">
    <citation type="journal article" date="2008" name="Genome Biol.">
        <title>The complete genome, comparative and functional analysis of Stenotrophomonas maltophilia reveals an organism heavily shielded by drug resistance determinants.</title>
        <authorList>
            <person name="Crossman L.C."/>
            <person name="Gould V.C."/>
            <person name="Dow J.M."/>
            <person name="Vernikos G.S."/>
            <person name="Okazaki A."/>
            <person name="Sebaihia M."/>
            <person name="Saunders D."/>
            <person name="Arrowsmith C."/>
            <person name="Carver T."/>
            <person name="Peters N."/>
            <person name="Adlem E."/>
            <person name="Kerhornou A."/>
            <person name="Lord A."/>
            <person name="Murphy L."/>
            <person name="Seeger K."/>
            <person name="Squares R."/>
            <person name="Rutter S."/>
            <person name="Quail M.A."/>
            <person name="Rajandream M.A."/>
            <person name="Harris D."/>
            <person name="Churcher C."/>
            <person name="Bentley S.D."/>
            <person name="Parkhill J."/>
            <person name="Thomson N.R."/>
            <person name="Avison M.B."/>
        </authorList>
    </citation>
    <scope>NUCLEOTIDE SEQUENCE [LARGE SCALE GENOMIC DNA]</scope>
    <source>
        <strain>K279a</strain>
    </source>
</reference>
<evidence type="ECO:0000255" key="1">
    <source>
        <dbReference type="HAMAP-Rule" id="MF_00337"/>
    </source>
</evidence>
<evidence type="ECO:0000256" key="2">
    <source>
        <dbReference type="SAM" id="MobiDB-lite"/>
    </source>
</evidence>
<gene>
    <name evidence="1" type="primary">xseB</name>
    <name type="ordered locus">Smlt3466</name>
</gene>
<keyword id="KW-0963">Cytoplasm</keyword>
<keyword id="KW-0269">Exonuclease</keyword>
<keyword id="KW-0378">Hydrolase</keyword>
<keyword id="KW-0540">Nuclease</keyword>
<keyword id="KW-1185">Reference proteome</keyword>
<dbReference type="EC" id="3.1.11.6" evidence="1"/>
<dbReference type="EMBL" id="AM743169">
    <property type="protein sequence ID" value="CAQ46890.1"/>
    <property type="molecule type" value="Genomic_DNA"/>
</dbReference>
<dbReference type="RefSeq" id="WP_005410522.1">
    <property type="nucleotide sequence ID" value="NC_010943.1"/>
</dbReference>
<dbReference type="SMR" id="B2FP36"/>
<dbReference type="EnsemblBacteria" id="CAQ46890">
    <property type="protein sequence ID" value="CAQ46890"/>
    <property type="gene ID" value="Smlt3466"/>
</dbReference>
<dbReference type="KEGG" id="sml:Smlt3466"/>
<dbReference type="eggNOG" id="COG1722">
    <property type="taxonomic scope" value="Bacteria"/>
</dbReference>
<dbReference type="HOGENOM" id="CLU_145918_3_3_6"/>
<dbReference type="Proteomes" id="UP000008840">
    <property type="component" value="Chromosome"/>
</dbReference>
<dbReference type="GO" id="GO:0005829">
    <property type="term" value="C:cytosol"/>
    <property type="evidence" value="ECO:0007669"/>
    <property type="project" value="TreeGrafter"/>
</dbReference>
<dbReference type="GO" id="GO:0009318">
    <property type="term" value="C:exodeoxyribonuclease VII complex"/>
    <property type="evidence" value="ECO:0007669"/>
    <property type="project" value="InterPro"/>
</dbReference>
<dbReference type="GO" id="GO:0008855">
    <property type="term" value="F:exodeoxyribonuclease VII activity"/>
    <property type="evidence" value="ECO:0007669"/>
    <property type="project" value="UniProtKB-UniRule"/>
</dbReference>
<dbReference type="GO" id="GO:0006308">
    <property type="term" value="P:DNA catabolic process"/>
    <property type="evidence" value="ECO:0007669"/>
    <property type="project" value="UniProtKB-UniRule"/>
</dbReference>
<dbReference type="Gene3D" id="1.10.287.1040">
    <property type="entry name" value="Exonuclease VII, small subunit"/>
    <property type="match status" value="1"/>
</dbReference>
<dbReference type="HAMAP" id="MF_00337">
    <property type="entry name" value="Exonuc_7_S"/>
    <property type="match status" value="1"/>
</dbReference>
<dbReference type="InterPro" id="IPR003761">
    <property type="entry name" value="Exonuc_VII_S"/>
</dbReference>
<dbReference type="InterPro" id="IPR037004">
    <property type="entry name" value="Exonuc_VII_ssu_sf"/>
</dbReference>
<dbReference type="NCBIfam" id="NF002140">
    <property type="entry name" value="PRK00977.1-4"/>
    <property type="match status" value="1"/>
</dbReference>
<dbReference type="NCBIfam" id="TIGR01280">
    <property type="entry name" value="xseB"/>
    <property type="match status" value="1"/>
</dbReference>
<dbReference type="PANTHER" id="PTHR34137">
    <property type="entry name" value="EXODEOXYRIBONUCLEASE 7 SMALL SUBUNIT"/>
    <property type="match status" value="1"/>
</dbReference>
<dbReference type="PANTHER" id="PTHR34137:SF1">
    <property type="entry name" value="EXODEOXYRIBONUCLEASE 7 SMALL SUBUNIT"/>
    <property type="match status" value="1"/>
</dbReference>
<dbReference type="Pfam" id="PF02609">
    <property type="entry name" value="Exonuc_VII_S"/>
    <property type="match status" value="1"/>
</dbReference>
<dbReference type="PIRSF" id="PIRSF006488">
    <property type="entry name" value="Exonuc_VII_S"/>
    <property type="match status" value="1"/>
</dbReference>
<dbReference type="SUPFAM" id="SSF116842">
    <property type="entry name" value="XseB-like"/>
    <property type="match status" value="1"/>
</dbReference>
<accession>B2FP36</accession>
<feature type="chain" id="PRO_1000119960" description="Exodeoxyribonuclease 7 small subunit">
    <location>
        <begin position="1"/>
        <end position="86"/>
    </location>
</feature>
<feature type="region of interest" description="Disordered" evidence="2">
    <location>
        <begin position="67"/>
        <end position="86"/>
    </location>
</feature>